<sequence>MAAKVEPFWKRKTLAQLDQDEWESLCDGCGLCCLQKLEDEDDGSVYYTRIACKLLDLQSCRCTNYAERIRFVPDCIQLTPAQADEFQWLPPTCGYRLVAEGKDLPLWHHLVCGDPERVHKERISQSGRMLSETQVAEDDWEDYLIFRAG</sequence>
<protein>
    <recommendedName>
        <fullName evidence="1">UPF0260 protein PA14_47410</fullName>
    </recommendedName>
</protein>
<proteinExistence type="inferred from homology"/>
<comment type="similarity">
    <text evidence="1">Belongs to the UPF0260 family.</text>
</comment>
<reference key="1">
    <citation type="journal article" date="2006" name="Genome Biol.">
        <title>Genomic analysis reveals that Pseudomonas aeruginosa virulence is combinatorial.</title>
        <authorList>
            <person name="Lee D.G."/>
            <person name="Urbach J.M."/>
            <person name="Wu G."/>
            <person name="Liberati N.T."/>
            <person name="Feinbaum R.L."/>
            <person name="Miyata S."/>
            <person name="Diggins L.T."/>
            <person name="He J."/>
            <person name="Saucier M."/>
            <person name="Deziel E."/>
            <person name="Friedman L."/>
            <person name="Li L."/>
            <person name="Grills G."/>
            <person name="Montgomery K."/>
            <person name="Kucherlapati R."/>
            <person name="Rahme L.G."/>
            <person name="Ausubel F.M."/>
        </authorList>
    </citation>
    <scope>NUCLEOTIDE SEQUENCE [LARGE SCALE GENOMIC DNA]</scope>
    <source>
        <strain>UCBPP-PA14</strain>
    </source>
</reference>
<dbReference type="EMBL" id="CP000438">
    <property type="protein sequence ID" value="ABJ10487.1"/>
    <property type="molecule type" value="Genomic_DNA"/>
</dbReference>
<dbReference type="RefSeq" id="WP_003082662.1">
    <property type="nucleotide sequence ID" value="NZ_CP034244.1"/>
</dbReference>
<dbReference type="KEGG" id="pau:PA14_47410"/>
<dbReference type="PseudoCAP" id="PA14_47410"/>
<dbReference type="HOGENOM" id="CLU_109769_0_1_6"/>
<dbReference type="BioCyc" id="PAER208963:G1G74-3985-MONOMER"/>
<dbReference type="Proteomes" id="UP000000653">
    <property type="component" value="Chromosome"/>
</dbReference>
<dbReference type="HAMAP" id="MF_00676">
    <property type="entry name" value="UPF0260"/>
    <property type="match status" value="1"/>
</dbReference>
<dbReference type="InterPro" id="IPR005358">
    <property type="entry name" value="Puta_zinc/iron-chelating_dom"/>
</dbReference>
<dbReference type="InterPro" id="IPR008228">
    <property type="entry name" value="UCP006173"/>
</dbReference>
<dbReference type="NCBIfam" id="NF003501">
    <property type="entry name" value="PRK05170.1-5"/>
    <property type="match status" value="1"/>
</dbReference>
<dbReference type="NCBIfam" id="NF003502">
    <property type="entry name" value="PRK05170.1-6"/>
    <property type="match status" value="1"/>
</dbReference>
<dbReference type="NCBIfam" id="NF003507">
    <property type="entry name" value="PRK05170.2-5"/>
    <property type="match status" value="1"/>
</dbReference>
<dbReference type="PANTHER" id="PTHR37421">
    <property type="entry name" value="UPF0260 PROTEIN YCGN"/>
    <property type="match status" value="1"/>
</dbReference>
<dbReference type="PANTHER" id="PTHR37421:SF1">
    <property type="entry name" value="UPF0260 PROTEIN YCGN"/>
    <property type="match status" value="1"/>
</dbReference>
<dbReference type="Pfam" id="PF03692">
    <property type="entry name" value="CxxCxxCC"/>
    <property type="match status" value="1"/>
</dbReference>
<dbReference type="PIRSF" id="PIRSF006173">
    <property type="entry name" value="UCP006173"/>
    <property type="match status" value="1"/>
</dbReference>
<feature type="chain" id="PRO_1000044800" description="UPF0260 protein PA14_47410">
    <location>
        <begin position="1"/>
        <end position="149"/>
    </location>
</feature>
<accession>Q02JE0</accession>
<gene>
    <name type="ordered locus">PA14_47410</name>
</gene>
<evidence type="ECO:0000255" key="1">
    <source>
        <dbReference type="HAMAP-Rule" id="MF_00676"/>
    </source>
</evidence>
<organism>
    <name type="scientific">Pseudomonas aeruginosa (strain UCBPP-PA14)</name>
    <dbReference type="NCBI Taxonomy" id="208963"/>
    <lineage>
        <taxon>Bacteria</taxon>
        <taxon>Pseudomonadati</taxon>
        <taxon>Pseudomonadota</taxon>
        <taxon>Gammaproteobacteria</taxon>
        <taxon>Pseudomonadales</taxon>
        <taxon>Pseudomonadaceae</taxon>
        <taxon>Pseudomonas</taxon>
    </lineage>
</organism>
<name>Y4741_PSEAB</name>